<dbReference type="EC" id="2.3.1.-" evidence="7"/>
<dbReference type="EMBL" id="CDMC01000024">
    <property type="protein sequence ID" value="CEL11266.1"/>
    <property type="molecule type" value="Genomic_DNA"/>
</dbReference>
<dbReference type="SMR" id="A0A0U5GFS8"/>
<dbReference type="STRING" id="454130.A0A0U5GFS8"/>
<dbReference type="ESTHER" id="aspci-ausa">
    <property type="family name" value="BD-FAE"/>
</dbReference>
<dbReference type="OMA" id="KDNIGHT"/>
<dbReference type="OrthoDB" id="429813at2759"/>
<dbReference type="UniPathway" id="UPA00213"/>
<dbReference type="Proteomes" id="UP000054771">
    <property type="component" value="Unassembled WGS sequence"/>
</dbReference>
<dbReference type="GO" id="GO:0004315">
    <property type="term" value="F:3-oxoacyl-[acyl-carrier-protein] synthase activity"/>
    <property type="evidence" value="ECO:0007669"/>
    <property type="project" value="InterPro"/>
</dbReference>
<dbReference type="GO" id="GO:0004312">
    <property type="term" value="F:fatty acid synthase activity"/>
    <property type="evidence" value="ECO:0007669"/>
    <property type="project" value="TreeGrafter"/>
</dbReference>
<dbReference type="GO" id="GO:0008168">
    <property type="term" value="F:methyltransferase activity"/>
    <property type="evidence" value="ECO:0007669"/>
    <property type="project" value="UniProtKB-KW"/>
</dbReference>
<dbReference type="GO" id="GO:0031177">
    <property type="term" value="F:phosphopantetheine binding"/>
    <property type="evidence" value="ECO:0007669"/>
    <property type="project" value="InterPro"/>
</dbReference>
<dbReference type="GO" id="GO:0006633">
    <property type="term" value="P:fatty acid biosynthetic process"/>
    <property type="evidence" value="ECO:0007669"/>
    <property type="project" value="InterPro"/>
</dbReference>
<dbReference type="GO" id="GO:0032259">
    <property type="term" value="P:methylation"/>
    <property type="evidence" value="ECO:0007669"/>
    <property type="project" value="UniProtKB-KW"/>
</dbReference>
<dbReference type="GO" id="GO:0044550">
    <property type="term" value="P:secondary metabolite biosynthetic process"/>
    <property type="evidence" value="ECO:0007669"/>
    <property type="project" value="TreeGrafter"/>
</dbReference>
<dbReference type="GO" id="GO:0016114">
    <property type="term" value="P:terpenoid biosynthetic process"/>
    <property type="evidence" value="ECO:0007669"/>
    <property type="project" value="UniProtKB-UniPathway"/>
</dbReference>
<dbReference type="CDD" id="cd02440">
    <property type="entry name" value="AdoMet_MTases"/>
    <property type="match status" value="1"/>
</dbReference>
<dbReference type="CDD" id="cd00833">
    <property type="entry name" value="PKS"/>
    <property type="match status" value="1"/>
</dbReference>
<dbReference type="Gene3D" id="3.30.70.3290">
    <property type="match status" value="1"/>
</dbReference>
<dbReference type="Gene3D" id="3.40.47.10">
    <property type="match status" value="1"/>
</dbReference>
<dbReference type="Gene3D" id="1.10.1200.10">
    <property type="entry name" value="ACP-like"/>
    <property type="match status" value="1"/>
</dbReference>
<dbReference type="Gene3D" id="3.40.50.1820">
    <property type="entry name" value="alpha/beta hydrolase"/>
    <property type="match status" value="1"/>
</dbReference>
<dbReference type="Gene3D" id="3.40.366.10">
    <property type="entry name" value="Malonyl-Coenzyme A Acyl Carrier Protein, domain 2"/>
    <property type="match status" value="2"/>
</dbReference>
<dbReference type="Gene3D" id="3.10.129.110">
    <property type="entry name" value="Polyketide synthase dehydratase"/>
    <property type="match status" value="1"/>
</dbReference>
<dbReference type="Gene3D" id="3.40.50.150">
    <property type="entry name" value="Vaccinia Virus protein VP39"/>
    <property type="match status" value="1"/>
</dbReference>
<dbReference type="InterPro" id="IPR029058">
    <property type="entry name" value="AB_hydrolase_fold"/>
</dbReference>
<dbReference type="InterPro" id="IPR001227">
    <property type="entry name" value="Ac_transferase_dom_sf"/>
</dbReference>
<dbReference type="InterPro" id="IPR036736">
    <property type="entry name" value="ACP-like_sf"/>
</dbReference>
<dbReference type="InterPro" id="IPR014043">
    <property type="entry name" value="Acyl_transferase_dom"/>
</dbReference>
<dbReference type="InterPro" id="IPR016035">
    <property type="entry name" value="Acyl_Trfase/lysoPLipase"/>
</dbReference>
<dbReference type="InterPro" id="IPR049492">
    <property type="entry name" value="BD-FAE-like_dom"/>
</dbReference>
<dbReference type="InterPro" id="IPR018201">
    <property type="entry name" value="Ketoacyl_synth_AS"/>
</dbReference>
<dbReference type="InterPro" id="IPR014031">
    <property type="entry name" value="Ketoacyl_synth_C"/>
</dbReference>
<dbReference type="InterPro" id="IPR014030">
    <property type="entry name" value="Ketoacyl_synth_N"/>
</dbReference>
<dbReference type="InterPro" id="IPR016036">
    <property type="entry name" value="Malonyl_transacylase_ACP-bd"/>
</dbReference>
<dbReference type="InterPro" id="IPR013217">
    <property type="entry name" value="Methyltransf_12"/>
</dbReference>
<dbReference type="InterPro" id="IPR020841">
    <property type="entry name" value="PKS_Beta-ketoAc_synthase_dom"/>
</dbReference>
<dbReference type="InterPro" id="IPR042104">
    <property type="entry name" value="PKS_dehydratase_sf"/>
</dbReference>
<dbReference type="InterPro" id="IPR020807">
    <property type="entry name" value="PKS_DH"/>
</dbReference>
<dbReference type="InterPro" id="IPR049900">
    <property type="entry name" value="PKS_mFAS_DH"/>
</dbReference>
<dbReference type="InterPro" id="IPR050091">
    <property type="entry name" value="PKS_NRPS_Biosynth_Enz"/>
</dbReference>
<dbReference type="InterPro" id="IPR020806">
    <property type="entry name" value="PKS_PP-bd"/>
</dbReference>
<dbReference type="InterPro" id="IPR009081">
    <property type="entry name" value="PP-bd_ACP"/>
</dbReference>
<dbReference type="InterPro" id="IPR006162">
    <property type="entry name" value="Ppantetheine_attach_site"/>
</dbReference>
<dbReference type="InterPro" id="IPR029063">
    <property type="entry name" value="SAM-dependent_MTases_sf"/>
</dbReference>
<dbReference type="InterPro" id="IPR016039">
    <property type="entry name" value="Thiolase-like"/>
</dbReference>
<dbReference type="PANTHER" id="PTHR43775">
    <property type="entry name" value="FATTY ACID SYNTHASE"/>
    <property type="match status" value="1"/>
</dbReference>
<dbReference type="PANTHER" id="PTHR43775:SF21">
    <property type="entry name" value="NON-REDUCING POLYKETIDE SYNTHASE AUSA-RELATED"/>
    <property type="match status" value="1"/>
</dbReference>
<dbReference type="Pfam" id="PF00698">
    <property type="entry name" value="Acyl_transf_1"/>
    <property type="match status" value="1"/>
</dbReference>
<dbReference type="Pfam" id="PF20434">
    <property type="entry name" value="BD-FAE"/>
    <property type="match status" value="1"/>
</dbReference>
<dbReference type="Pfam" id="PF18558">
    <property type="entry name" value="HTH_51"/>
    <property type="match status" value="1"/>
</dbReference>
<dbReference type="Pfam" id="PF00109">
    <property type="entry name" value="ketoacyl-synt"/>
    <property type="match status" value="1"/>
</dbReference>
<dbReference type="Pfam" id="PF02801">
    <property type="entry name" value="Ketoacyl-synt_C"/>
    <property type="match status" value="1"/>
</dbReference>
<dbReference type="Pfam" id="PF08242">
    <property type="entry name" value="Methyltransf_12"/>
    <property type="match status" value="1"/>
</dbReference>
<dbReference type="Pfam" id="PF00550">
    <property type="entry name" value="PP-binding"/>
    <property type="match status" value="1"/>
</dbReference>
<dbReference type="SMART" id="SM00827">
    <property type="entry name" value="PKS_AT"/>
    <property type="match status" value="1"/>
</dbReference>
<dbReference type="SMART" id="SM00826">
    <property type="entry name" value="PKS_DH"/>
    <property type="match status" value="1"/>
</dbReference>
<dbReference type="SMART" id="SM00825">
    <property type="entry name" value="PKS_KS"/>
    <property type="match status" value="1"/>
</dbReference>
<dbReference type="SMART" id="SM00823">
    <property type="entry name" value="PKS_PP"/>
    <property type="match status" value="1"/>
</dbReference>
<dbReference type="SMART" id="SM01294">
    <property type="entry name" value="PKS_PP_betabranch"/>
    <property type="match status" value="1"/>
</dbReference>
<dbReference type="SUPFAM" id="SSF47336">
    <property type="entry name" value="ACP-like"/>
    <property type="match status" value="1"/>
</dbReference>
<dbReference type="SUPFAM" id="SSF53474">
    <property type="entry name" value="alpha/beta-Hydrolases"/>
    <property type="match status" value="1"/>
</dbReference>
<dbReference type="SUPFAM" id="SSF52151">
    <property type="entry name" value="FabD/lysophospholipase-like"/>
    <property type="match status" value="1"/>
</dbReference>
<dbReference type="SUPFAM" id="SSF55048">
    <property type="entry name" value="Probable ACP-binding domain of malonyl-CoA ACP transacylase"/>
    <property type="match status" value="1"/>
</dbReference>
<dbReference type="SUPFAM" id="SSF53335">
    <property type="entry name" value="S-adenosyl-L-methionine-dependent methyltransferases"/>
    <property type="match status" value="1"/>
</dbReference>
<dbReference type="SUPFAM" id="SSF53901">
    <property type="entry name" value="Thiolase-like"/>
    <property type="match status" value="1"/>
</dbReference>
<dbReference type="PROSITE" id="PS50075">
    <property type="entry name" value="CARRIER"/>
    <property type="match status" value="1"/>
</dbReference>
<dbReference type="PROSITE" id="PS00606">
    <property type="entry name" value="KS3_1"/>
    <property type="match status" value="1"/>
</dbReference>
<dbReference type="PROSITE" id="PS52004">
    <property type="entry name" value="KS3_2"/>
    <property type="match status" value="1"/>
</dbReference>
<dbReference type="PROSITE" id="PS00012">
    <property type="entry name" value="PHOSPHOPANTETHEINE"/>
    <property type="match status" value="1"/>
</dbReference>
<dbReference type="PROSITE" id="PS52019">
    <property type="entry name" value="PKS_MFAS_DH"/>
    <property type="match status" value="1"/>
</dbReference>
<comment type="function">
    <text evidence="1 7 8">Non-reducing polyketide synthase; part of the gene cluster that mediates the biosynthesis of calidodehydroaustin, a fungal meroterpenoid (PubMed:28233494, PubMed:29076725). The first step of the pathway is the synthesis of 3,5-dimethylorsellinic acid by the polyketide synthase ausA (PubMed:28233494). 3,5-dimethylorsellinic acid is then prenylated by the polyprenyl transferase ausN (PubMed:28233494). Further epoxidation by the FAD-dependent monooxygenase ausM and cyclization by the probable terpene cyclase ausL lead to the formation of protoaustinoid A (By similarity). Protoaustinoid A is then oxidized to spiro-lactone preaustinoid A3 by the combined action of the FAD-binding monooxygenases ausB and ausC, and the dioxygenase ausE (By similarity). Acid-catalyzed keto-rearrangement and ring contraction of the tetraketide portion of preaustinoid A3 by ausJ lead to the formation of preaustinoid A4 (By similarity). The aldo-keto reductase ausK, with the help of ausH, is involved in the next step by transforming preaustinoid A4 into isoaustinone which is in turn hydroxylated by the P450 monooxygenase ausI to form austinolide (By similarity). The cytochrome P450 monooxygenase ausG modifies austinolide to austinol (By similarity). Austinol is further acetylated to austin by the O-acetyltransferase ausP, which spontaneously changes to dehydroaustin (PubMed:28233494). The cytochrome P450 monooxygenase ausR then converts dehydroaustin is into 7-dehydrodehydroaustin (PubMed:28233494). The hydroxylation catalyzed by ausR permits the O-acetyltransferase ausQ to add an additional acetyl group to the molecule, leading to the formation of acetoxydehydroaustin (PubMed:28233494). The short chain dehydrogenase ausT catalyzes the reduction of the double bond present between carbon atoms 1 and 2 to convert 7-dehydrodehydroaustin into 1,2-dihydro-7-hydroxydehydroaustin (PubMed:28233494). AusQ catalyzes not only an acetylation reaction but also the addition of the PKS ausV diketide product to 1,2-dihydro-7-hydroxydehydroaustin, forming precalidodehydroaustin (PubMed:28233494). Finally, the iron/alpha-ketoglutarate-dependent dioxygenase converts precalidodehydroaustin into calidodehydroaustin (PubMed:28233494).</text>
</comment>
<comment type="catalytic activity">
    <reaction evidence="1">
        <text>3 malonyl-CoA + acetyl-CoA + 2 S-adenosyl-L-methionine = 3,5-dimethylorsellinate + 2 S-adenosyl-L-homocysteine + 3 CO2 + 4 CoA</text>
        <dbReference type="Rhea" id="RHEA:49628"/>
        <dbReference type="ChEBI" id="CHEBI:16526"/>
        <dbReference type="ChEBI" id="CHEBI:57287"/>
        <dbReference type="ChEBI" id="CHEBI:57288"/>
        <dbReference type="ChEBI" id="CHEBI:57384"/>
        <dbReference type="ChEBI" id="CHEBI:57856"/>
        <dbReference type="ChEBI" id="CHEBI:59789"/>
        <dbReference type="ChEBI" id="CHEBI:131856"/>
    </reaction>
    <physiologicalReaction direction="left-to-right" evidence="1">
        <dbReference type="Rhea" id="RHEA:49629"/>
    </physiologicalReaction>
</comment>
<comment type="pathway">
    <text evidence="7">Secondary metabolite biosynthesis; terpenoid biosynthesis.</text>
</comment>
<comment type="domain">
    <text evidence="1">Multidomain protein; including a starter unit:ACP transacylase (SAT) that selects the starter unit; a ketosynthase (KS) that catalyzes repeated decarboxylative condensation to elongate the polyketide backbone; a malonyl-CoA:ACP transacylase (MAT) that selects and transfers the extender unit malonyl-CoA; a product template (PT) domain that controls the immediate cyclization regioselectivity of the reactive polyketide backbone; and an acyl-carrier protein (ACP) that serves as the tether of the growing and completed polyketide via its phosphopantetheinyl arm.</text>
</comment>
<comment type="domain">
    <text evidence="1">The release of the polyketide chain from the non-reducing polyketide synthase is mediated by the thioesterase (TE) domain localized at the C-terminus of the protein.</text>
</comment>
<comment type="disruption phenotype">
    <text evidence="7">Impairs the biosynthesis of calidodehydroaustin.</text>
</comment>
<comment type="miscellaneous">
    <text evidence="10">In A.calidoustus, the austinoid gene cluster lies on a contiguous DNA region, while clusters from E.nidulans and P.brasilianum are split in their respective genomes. Genetic rearrangements provoked variability among the clusters and E.nidulans produces the least number of austionoid derivatives with the end products austinol and dehydroaustinol, while P.brasilianum can produce until acetoxydehydroaustin, and A.calidoustus produces the highest number of identified derivatives.</text>
</comment>
<protein>
    <recommendedName>
        <fullName evidence="9">Non-reducing polyketide synthase ausA</fullName>
        <ecNumber evidence="7">2.3.1.-</ecNumber>
    </recommendedName>
    <alternativeName>
        <fullName evidence="9">Austinoid biosynthesis cluster protein A</fullName>
    </alternativeName>
</protein>
<sequence length="2462" mass="267853">MGPQTPSSEPPRPVTVFFGPVYPELTQSSSRIRQYLADKASAGWLDDTLQGLPSTWQDIMRQWPALKKIPGESLLRQLTQYLCRESSCPVGDTLNLLLVPVTVLRHIVEFQQLKDEKKHLEIRDVQGFCVGVLAAITASWEHDDAEFPKVVSTVLRVAVCIGALVDLDEVNGSSSKSMAVRWKTKCEYRHLGQVLERYKGYIACMIKTNGATVTVPTANYLSLAEELESHGISVKNLPLRGRFHTADHIPAMKQLLALCARDARFQLPIKKNLPLLPRSNVDGTRLPSNVLMAAAVESILAKQANWMLTVAEALNSEGPPDEKHAVVIGAGQIIPQRSLLASVEHIGDQMAPTDTSLHRPSPTIDIRPTAQCNGTSPETSTQAVSAPIAVTGFACRYPQADSVEALWTLLERGQCTVSSMPNHRLKADSLQRQPRGPFWGNYLESPESFDHRFFGVSAREAESMDPQQRLLLQVAYEAIESATYCGLRATKLPDDVGCYIGVGSDDYSQNVGSRDATAFSATGTLQAFNSGRISHFFGWSGPSITVDTACSSAAVAIHLACRALQANDCSIAVAGGVNVMTDPRWSQNLAAASFLSPTGASKAFDAAADGYCRGEGAGLLVLRPLDAALRDGDPIHAVITGTCVNQGANCSPITVPDSNSQRSLYMKALAQSGLHPDAVCYVEAHGTGTQVGDPIEYESIRCTFGGPQRTETVYIGSIKDNIGHTETSSGAAGMVKTILMIQKRRIPKQANFSCLNPRIVTHERDQIAIPTQSLEWKAAKRVALVTNYGAAGSNAVIVVKEPIKPGVDRSTWPARVPFIITAKTEESLREYCRELQHTLLAQQQGSGSATHHLAYNLAAKQNRCLEYQLSFSCEPAEVATRLQDIAAGRSKPTRCTAPSPPVVLCFGGQTGDTASISPTLVENCDILRSHLTQCDEVCHALGLPGLFPTIFSPEPRTDLVSLHCILFSIQYASAKAWLDCGLVVDRMIGHSFGQLTAICVAGGLSLIDGLRLVSKRAALIQEKWGPERGVMLSLKVTKTQVQELLCAASGTVDVACFNGPQSFVLAGNEKSIAQVETLCVQRGLEHHKKRLRNTHAFHSRLVEPLLPELSQVADTLDYSPLRIPVEACSEEPDHWARLTASKVVRHSREPVYFHPAVQRTLRHIPGPCVWLEAGSASPIVGMVRRVVKASGPGGEHTYLPIDLQESTAECNLADVTKVLWSKGVPVQFWAFHGSPAGYKWINLPPYQFSKTRHWIDYDPYAFHPTGALSEEEKHDDGLLQLVERDANGCLFRINNQDPAYRMCTEGHAVVDQNLCPASLYVEIVVRGAMTLSANGQAAAMAHIEALSISAPLVVDMPGSVCLSVTQIANNNDGGWMFSLFSQDGDRTPITHATGKVLLDPQAAGSAASARFHSLKRLLDPGQFDSIPKSPSSNGLKRATVYQAFRRAVNYADYYRGVEEVYAVGHRAAGRVLLPSSPTRMAACDPILMDNFLQVAGIHVNCLSETDEDEVFVCSSVGEVSLGSRYLNRDAATPQAWTVYSTYERESGKRVTCDVFALDEDRMLAVTIMSATFTSVSIQSLKRTLSRLNGHSSSLGQHEPQLQEKLAPAAHITVSDDHHLRAVQSMLGDLLGVSPGELPGNAPLAEIGVDSLMSTEVLAEVDKRFGVNITNTELADIADVRGLAHRISPSSSVVHVETSKESSVANDISVGGQQPIIESPPVTHQEDSPRFADRAITAFAATRGSTKYIDLTQFSAFCTSVYPQQMRLVTAYVAEAFQALGANLESMLPGQSIPSLAILPQHNQVLGQLIGVLEYAGLVEQKSTGLFRTGKPVDVGPSAVLHQTILGDYPQHASEHKLLRTTGARLAECLTGTADPLSLLFQDAQARALMQDVYSNAPMFKAATMQLAQYLQDLLLDSGCDREIEILEIGAGTGGTTAFLVSQLAAMPGVKFKYTFTDLSSSLVTLARKRFGSYSFMRYSTLDIEKMPRDELLGKYDIILSSNCIHATRSLAASCMHIRKMLRPHGLLCLIELTRNLPWFDLVFGLLGGWWLFNDGRSHALANESLWDTRLREAGFNWVDWTDNPLEESDILRLIVASPTMASPPLPVKQPITPARVETVRYGERAGVQLMADIYYPHTVDAKGTKRPIALLIHGGGHIMLSRKDIRPYQVDLLLDAGFLPVSIDYRLCPEVSLLEGPMPDVRDALAWARADLPRQSLSRTDIQPDGDRVVAVGWSTGGHLAMTLSWTAPEHGILPPQAILAFYSPTDYTDPFWTTPNFPYAGAVSEEDTKLTRPLDALRDSPITAYNPPANKHALGGWMAPSDPRSQIALYMNWTGQALPVLFNGCNYKKLAAAKGPTTSEVILPAPPLADVQRACPLSQIVAGRYKTPTFLIHGGLDDLIPVQQAERTQDAMRAAGVESTLRVVQGGLHLFDLGIDISAVDEDGPRAVREGYEFLRQHVAV</sequence>
<name>AUSA_ASPCI</name>
<keyword id="KW-0489">Methyltransferase</keyword>
<keyword id="KW-0511">Multifunctional enzyme</keyword>
<keyword id="KW-0596">Phosphopantetheine</keyword>
<keyword id="KW-0597">Phosphoprotein</keyword>
<keyword id="KW-1185">Reference proteome</keyword>
<keyword id="KW-0808">Transferase</keyword>
<accession>A0A0U5GFS8</accession>
<gene>
    <name evidence="9" type="primary">ausA</name>
    <name type="ORF">ASPCAL14369</name>
</gene>
<evidence type="ECO:0000250" key="1">
    <source>
        <dbReference type="UniProtKB" id="Q5ATJ7"/>
    </source>
</evidence>
<evidence type="ECO:0000255" key="2"/>
<evidence type="ECO:0000255" key="3">
    <source>
        <dbReference type="PROSITE-ProRule" id="PRU00258"/>
    </source>
</evidence>
<evidence type="ECO:0000255" key="4">
    <source>
        <dbReference type="PROSITE-ProRule" id="PRU01348"/>
    </source>
</evidence>
<evidence type="ECO:0000255" key="5">
    <source>
        <dbReference type="PROSITE-ProRule" id="PRU01363"/>
    </source>
</evidence>
<evidence type="ECO:0000255" key="6">
    <source>
        <dbReference type="PROSITE-ProRule" id="PRU10022"/>
    </source>
</evidence>
<evidence type="ECO:0000269" key="7">
    <source>
    </source>
</evidence>
<evidence type="ECO:0000269" key="8">
    <source>
    </source>
</evidence>
<evidence type="ECO:0000303" key="9">
    <source>
    </source>
</evidence>
<evidence type="ECO:0000305" key="10">
    <source>
    </source>
</evidence>
<proteinExistence type="evidence at protein level"/>
<reference key="1">
    <citation type="journal article" date="2016" name="Genome Announc.">
        <title>Draft genome sequences of fungus Aspergillus calidoustus.</title>
        <authorList>
            <person name="Horn F."/>
            <person name="Linde J."/>
            <person name="Mattern D.J."/>
            <person name="Walther G."/>
            <person name="Guthke R."/>
            <person name="Scherlach K."/>
            <person name="Martin K."/>
            <person name="Brakhage A.A."/>
            <person name="Petzke L."/>
            <person name="Valiante V."/>
        </authorList>
    </citation>
    <scope>NUCLEOTIDE SEQUENCE [LARGE SCALE GENOMIC DNA]</scope>
    <source>
        <strain>SF006504</strain>
    </source>
</reference>
<reference key="2">
    <citation type="journal article" date="2017" name="ACS Chem. Biol.">
        <title>Discovery of an Extended Austinoid Biosynthetic Pathway in Aspergillus calidoustus.</title>
        <authorList>
            <person name="Valiante V."/>
            <person name="Mattern D.J."/>
            <person name="Schueffler A."/>
            <person name="Horn F."/>
            <person name="Walther G."/>
            <person name="Scherlach K."/>
            <person name="Petzke L."/>
            <person name="Dickhaut J."/>
            <person name="Guthke R."/>
            <person name="Hertweck C."/>
            <person name="Nett M."/>
            <person name="Thines E."/>
            <person name="Brakhage A.A."/>
        </authorList>
    </citation>
    <scope>FUNCTION</scope>
    <scope>CATALYTIC ACTIVITY</scope>
    <scope>DISRUPTION PHENOTYPE</scope>
    <scope>PATHWAY</scope>
</reference>
<reference key="3">
    <citation type="journal article" date="2017" name="ACS Chem. Biol.">
        <title>Rewiring of the austinoid biosynthetic pathway in filamentous fungi.</title>
        <authorList>
            <person name="Mattern D.J."/>
            <person name="Valiante V."/>
            <person name="Horn F."/>
            <person name="Petzke L."/>
            <person name="Brakhage A.A."/>
        </authorList>
    </citation>
    <scope>FUNCTION</scope>
</reference>
<organism>
    <name type="scientific">Aspergillus calidoustus</name>
    <dbReference type="NCBI Taxonomy" id="454130"/>
    <lineage>
        <taxon>Eukaryota</taxon>
        <taxon>Fungi</taxon>
        <taxon>Dikarya</taxon>
        <taxon>Ascomycota</taxon>
        <taxon>Pezizomycotina</taxon>
        <taxon>Eurotiomycetes</taxon>
        <taxon>Eurotiomycetidae</taxon>
        <taxon>Eurotiales</taxon>
        <taxon>Aspergillaceae</taxon>
        <taxon>Aspergillus</taxon>
        <taxon>Aspergillus subgen. Nidulantes</taxon>
    </lineage>
</organism>
<feature type="chain" id="PRO_0000453844" description="Non-reducing polyketide synthase ausA">
    <location>
        <begin position="1"/>
        <end position="2462"/>
    </location>
</feature>
<feature type="domain" description="Ketosynthase family 3 (KS3)" evidence="4">
    <location>
        <begin position="385"/>
        <end position="801"/>
    </location>
</feature>
<feature type="domain" description="PKS/mFAS DH" evidence="5">
    <location>
        <begin position="1274"/>
        <end position="1581"/>
    </location>
</feature>
<feature type="domain" description="Carrier" evidence="3">
    <location>
        <begin position="1613"/>
        <end position="1690"/>
    </location>
</feature>
<feature type="region of interest" description="N-terminal acylcarrier protein transacylase domain (SAT)" evidence="2">
    <location>
        <begin position="16"/>
        <end position="253"/>
    </location>
</feature>
<feature type="region of interest" description="Malonyl-CoA:ACP transacylase (MAT) domain" evidence="2">
    <location>
        <begin position="904"/>
        <end position="1208"/>
    </location>
</feature>
<feature type="region of interest" description="N-terminal hotdog fold" evidence="5">
    <location>
        <begin position="1274"/>
        <end position="1403"/>
    </location>
</feature>
<feature type="region of interest" description="Product template (PT) domain" evidence="2">
    <location>
        <begin position="1277"/>
        <end position="1580"/>
    </location>
</feature>
<feature type="region of interest" description="C-terminal hotdog fold" evidence="5">
    <location>
        <begin position="1431"/>
        <end position="1581"/>
    </location>
</feature>
<feature type="region of interest" description="Methyltransferase (CMeT) domain" evidence="2">
    <location>
        <begin position="1850"/>
        <end position="2083"/>
    </location>
</feature>
<feature type="region of interest" description="Thioesterase (TE) domain" evidence="1">
    <location>
        <begin position="2112"/>
        <end position="2462"/>
    </location>
</feature>
<feature type="active site" description="For beta-ketoacyl synthase activity" evidence="4">
    <location>
        <position position="550"/>
    </location>
</feature>
<feature type="active site" description="For beta-ketoacyl synthase activity" evidence="4">
    <location>
        <position position="685"/>
    </location>
</feature>
<feature type="active site" description="For beta-ketoacyl synthase activity" evidence="4">
    <location>
        <position position="724"/>
    </location>
</feature>
<feature type="active site" description="For acyl/malonyl transferase activity" evidence="6">
    <location>
        <position position="991"/>
    </location>
</feature>
<feature type="active site" description="Proton acceptor; for dehydratase activity" evidence="5">
    <location>
        <position position="1307"/>
    </location>
</feature>
<feature type="active site" description="Proton donor; for dehydratase activity" evidence="5">
    <location>
        <position position="1489"/>
    </location>
</feature>
<feature type="active site" description="For thioesterase activity" evidence="1">
    <location>
        <position position="2235"/>
    </location>
</feature>
<feature type="active site" description="For thioesterase activity" evidence="1">
    <location>
        <position position="2398"/>
    </location>
</feature>
<feature type="active site" description="For thioesterase activity" evidence="1">
    <location>
        <position position="2430"/>
    </location>
</feature>
<feature type="modified residue" description="O-(pantetheine 4'-phosphoryl)serine" evidence="3">
    <location>
        <position position="1650"/>
    </location>
</feature>